<evidence type="ECO:0000255" key="1">
    <source>
        <dbReference type="HAMAP-Rule" id="MF_00600"/>
    </source>
</evidence>
<sequence length="539" mass="57552">MAKIINFNDEARKKLEIGVNTLADAVKVTLGPRGRNVVLEKSYGAPLITNDGVTIAKEIELEDPFENMGAALVKEVAIKSNDVAGDGTTTATILAQAIVKEGLKMLSAGANPIFLKKGIELAAKEAIDVLKDKAKKIESNEEISQVASISAGDEEIGKLIAQAMAKVGETGVITVEEAKSLETTLETVEGMQFDKGYVSPYMVTDSERMTAELDNPLILLTDKKISSMKELLPLLEQTVQMSKPVLIVADDIEGEALTTLVINKLRGTLNVVAVKAPAFGDRRKAILEDIAILTGGEVISEEKGMKLEEATIQQLGKAKTVKVTKDLTVIVDGGGEQKDISARVNSIKAQIEETTSDYDKEKLQERLAKLSGGVAVIKVGAATEVEMKDKKLRIEDALNATRAAVEEGIVAGGGTILLDIIESMKDFNETGEIAMGIEIVKRALEAPIKQIAENCGLNGGVVLEKVRMSPKGFGFDAKNEKYVNMIECGIIDPAKVTRAAIQNSTSVASLLLTTEVVIANKKEEEKAPMGAGGMMPGMM</sequence>
<reference key="1">
    <citation type="submission" date="2001-07" db="EMBL/GenBank/DDBJ databases">
        <title>Genes encoding heat shock proteins 10 and 60 from Fusobacterium nucleatum ATCC 10953.</title>
        <authorList>
            <person name="Skar C.K."/>
            <person name="Bolstad A."/>
            <person name="Bakken V."/>
        </authorList>
    </citation>
    <scope>NUCLEOTIDE SEQUENCE [GENOMIC DNA]</scope>
    <source>
        <strain>ATCC 10953 / DSM 20482 / CCUG 9126 / JCM 12990 / NCTC 10562 / 555A</strain>
    </source>
</reference>
<name>CH60_FUSNP</name>
<organism>
    <name type="scientific">Fusobacterium nucleatum subsp. polymorphum</name>
    <name type="common">Fusobacterium polymorphum</name>
    <dbReference type="NCBI Taxonomy" id="76857"/>
    <lineage>
        <taxon>Bacteria</taxon>
        <taxon>Fusobacteriati</taxon>
        <taxon>Fusobacteriota</taxon>
        <taxon>Fusobacteriia</taxon>
        <taxon>Fusobacteriales</taxon>
        <taxon>Fusobacteriaceae</taxon>
        <taxon>Fusobacterium</taxon>
    </lineage>
</organism>
<protein>
    <recommendedName>
        <fullName evidence="1">Chaperonin GroEL</fullName>
        <ecNumber evidence="1">5.6.1.7</ecNumber>
    </recommendedName>
    <alternativeName>
        <fullName evidence="1">60 kDa chaperonin</fullName>
    </alternativeName>
    <alternativeName>
        <fullName evidence="1">Chaperonin-60</fullName>
        <shortName evidence="1">Cpn60</shortName>
    </alternativeName>
</protein>
<proteinExistence type="inferred from homology"/>
<keyword id="KW-0067">ATP-binding</keyword>
<keyword id="KW-0143">Chaperone</keyword>
<keyword id="KW-0963">Cytoplasm</keyword>
<keyword id="KW-0413">Isomerase</keyword>
<keyword id="KW-0547">Nucleotide-binding</keyword>
<comment type="function">
    <text evidence="1">Together with its co-chaperonin GroES, plays an essential role in assisting protein folding. The GroEL-GroES system forms a nano-cage that allows encapsulation of the non-native substrate proteins and provides a physical environment optimized to promote and accelerate protein folding.</text>
</comment>
<comment type="catalytic activity">
    <reaction evidence="1">
        <text>ATP + H2O + a folded polypeptide = ADP + phosphate + an unfolded polypeptide.</text>
        <dbReference type="EC" id="5.6.1.7"/>
    </reaction>
</comment>
<comment type="subunit">
    <text evidence="1">Forms a cylinder of 14 subunits composed of two heptameric rings stacked back-to-back. Interacts with the co-chaperonin GroES.</text>
</comment>
<comment type="subcellular location">
    <subcellularLocation>
        <location evidence="1">Cytoplasm</location>
    </subcellularLocation>
</comment>
<comment type="similarity">
    <text evidence="1">Belongs to the chaperonin (HSP60) family.</text>
</comment>
<gene>
    <name evidence="1" type="primary">groEL</name>
    <name evidence="1" type="synonym">groL</name>
    <name type="synonym">hsp60</name>
</gene>
<accession>Q8GJ00</accession>
<feature type="chain" id="PRO_0000063379" description="Chaperonin GroEL">
    <location>
        <begin position="1"/>
        <end position="539"/>
    </location>
</feature>
<feature type="binding site" evidence="1">
    <location>
        <begin position="29"/>
        <end position="32"/>
    </location>
    <ligand>
        <name>ATP</name>
        <dbReference type="ChEBI" id="CHEBI:30616"/>
    </ligand>
</feature>
<feature type="binding site" evidence="1">
    <location>
        <begin position="86"/>
        <end position="90"/>
    </location>
    <ligand>
        <name>ATP</name>
        <dbReference type="ChEBI" id="CHEBI:30616"/>
    </ligand>
</feature>
<feature type="binding site" evidence="1">
    <location>
        <position position="413"/>
    </location>
    <ligand>
        <name>ATP</name>
        <dbReference type="ChEBI" id="CHEBI:30616"/>
    </ligand>
</feature>
<feature type="binding site" evidence="1">
    <location>
        <position position="492"/>
    </location>
    <ligand>
        <name>ATP</name>
        <dbReference type="ChEBI" id="CHEBI:30616"/>
    </ligand>
</feature>
<dbReference type="EC" id="5.6.1.7" evidence="1"/>
<dbReference type="EMBL" id="AJ320160">
    <property type="protein sequence ID" value="CAC86118.1"/>
    <property type="molecule type" value="Genomic_DNA"/>
</dbReference>
<dbReference type="RefSeq" id="WP_005897776.1">
    <property type="nucleotide sequence ID" value="NZ_LN831027.1"/>
</dbReference>
<dbReference type="SMR" id="Q8GJ00"/>
<dbReference type="STRING" id="76857.RO02_02155"/>
<dbReference type="GeneID" id="45635341"/>
<dbReference type="KEGG" id="fpol:ERS445057_01568"/>
<dbReference type="PATRIC" id="fig|76857.9.peg.1532"/>
<dbReference type="GO" id="GO:0005737">
    <property type="term" value="C:cytoplasm"/>
    <property type="evidence" value="ECO:0007669"/>
    <property type="project" value="UniProtKB-SubCell"/>
</dbReference>
<dbReference type="GO" id="GO:0005524">
    <property type="term" value="F:ATP binding"/>
    <property type="evidence" value="ECO:0007669"/>
    <property type="project" value="UniProtKB-UniRule"/>
</dbReference>
<dbReference type="GO" id="GO:0140662">
    <property type="term" value="F:ATP-dependent protein folding chaperone"/>
    <property type="evidence" value="ECO:0007669"/>
    <property type="project" value="InterPro"/>
</dbReference>
<dbReference type="GO" id="GO:0016853">
    <property type="term" value="F:isomerase activity"/>
    <property type="evidence" value="ECO:0007669"/>
    <property type="project" value="UniProtKB-KW"/>
</dbReference>
<dbReference type="GO" id="GO:0051082">
    <property type="term" value="F:unfolded protein binding"/>
    <property type="evidence" value="ECO:0007669"/>
    <property type="project" value="UniProtKB-UniRule"/>
</dbReference>
<dbReference type="GO" id="GO:0042026">
    <property type="term" value="P:protein refolding"/>
    <property type="evidence" value="ECO:0007669"/>
    <property type="project" value="UniProtKB-UniRule"/>
</dbReference>
<dbReference type="CDD" id="cd03344">
    <property type="entry name" value="GroEL"/>
    <property type="match status" value="1"/>
</dbReference>
<dbReference type="FunFam" id="3.50.7.10:FF:000001">
    <property type="entry name" value="60 kDa chaperonin"/>
    <property type="match status" value="1"/>
</dbReference>
<dbReference type="Gene3D" id="3.50.7.10">
    <property type="entry name" value="GroEL"/>
    <property type="match status" value="1"/>
</dbReference>
<dbReference type="Gene3D" id="1.10.560.10">
    <property type="entry name" value="GroEL-like equatorial domain"/>
    <property type="match status" value="1"/>
</dbReference>
<dbReference type="Gene3D" id="3.30.260.10">
    <property type="entry name" value="TCP-1-like chaperonin intermediate domain"/>
    <property type="match status" value="1"/>
</dbReference>
<dbReference type="HAMAP" id="MF_00600">
    <property type="entry name" value="CH60"/>
    <property type="match status" value="1"/>
</dbReference>
<dbReference type="InterPro" id="IPR018370">
    <property type="entry name" value="Chaperonin_Cpn60_CS"/>
</dbReference>
<dbReference type="InterPro" id="IPR001844">
    <property type="entry name" value="Cpn60/GroEL"/>
</dbReference>
<dbReference type="InterPro" id="IPR002423">
    <property type="entry name" value="Cpn60/GroEL/TCP-1"/>
</dbReference>
<dbReference type="InterPro" id="IPR027409">
    <property type="entry name" value="GroEL-like_apical_dom_sf"/>
</dbReference>
<dbReference type="InterPro" id="IPR027413">
    <property type="entry name" value="GROEL-like_equatorial_sf"/>
</dbReference>
<dbReference type="InterPro" id="IPR027410">
    <property type="entry name" value="TCP-1-like_intermed_sf"/>
</dbReference>
<dbReference type="NCBIfam" id="TIGR02348">
    <property type="entry name" value="GroEL"/>
    <property type="match status" value="1"/>
</dbReference>
<dbReference type="NCBIfam" id="NF000592">
    <property type="entry name" value="PRK00013.1"/>
    <property type="match status" value="1"/>
</dbReference>
<dbReference type="NCBIfam" id="NF009487">
    <property type="entry name" value="PRK12849.1"/>
    <property type="match status" value="1"/>
</dbReference>
<dbReference type="NCBIfam" id="NF009488">
    <property type="entry name" value="PRK12850.1"/>
    <property type="match status" value="1"/>
</dbReference>
<dbReference type="NCBIfam" id="NF009489">
    <property type="entry name" value="PRK12851.1"/>
    <property type="match status" value="1"/>
</dbReference>
<dbReference type="PANTHER" id="PTHR45633">
    <property type="entry name" value="60 KDA HEAT SHOCK PROTEIN, MITOCHONDRIAL"/>
    <property type="match status" value="1"/>
</dbReference>
<dbReference type="Pfam" id="PF00118">
    <property type="entry name" value="Cpn60_TCP1"/>
    <property type="match status" value="1"/>
</dbReference>
<dbReference type="PRINTS" id="PR00298">
    <property type="entry name" value="CHAPERONIN60"/>
</dbReference>
<dbReference type="SUPFAM" id="SSF52029">
    <property type="entry name" value="GroEL apical domain-like"/>
    <property type="match status" value="1"/>
</dbReference>
<dbReference type="SUPFAM" id="SSF48592">
    <property type="entry name" value="GroEL equatorial domain-like"/>
    <property type="match status" value="1"/>
</dbReference>
<dbReference type="SUPFAM" id="SSF54849">
    <property type="entry name" value="GroEL-intermediate domain like"/>
    <property type="match status" value="1"/>
</dbReference>
<dbReference type="PROSITE" id="PS00296">
    <property type="entry name" value="CHAPERONINS_CPN60"/>
    <property type="match status" value="1"/>
</dbReference>